<reference key="1">
    <citation type="journal article" date="2002" name="Nature">
        <title>The genome sequence of Schizosaccharomyces pombe.</title>
        <authorList>
            <person name="Wood V."/>
            <person name="Gwilliam R."/>
            <person name="Rajandream M.A."/>
            <person name="Lyne M.H."/>
            <person name="Lyne R."/>
            <person name="Stewart A."/>
            <person name="Sgouros J.G."/>
            <person name="Peat N."/>
            <person name="Hayles J."/>
            <person name="Baker S.G."/>
            <person name="Basham D."/>
            <person name="Bowman S."/>
            <person name="Brooks K."/>
            <person name="Brown D."/>
            <person name="Brown S."/>
            <person name="Chillingworth T."/>
            <person name="Churcher C.M."/>
            <person name="Collins M."/>
            <person name="Connor R."/>
            <person name="Cronin A."/>
            <person name="Davis P."/>
            <person name="Feltwell T."/>
            <person name="Fraser A."/>
            <person name="Gentles S."/>
            <person name="Goble A."/>
            <person name="Hamlin N."/>
            <person name="Harris D.E."/>
            <person name="Hidalgo J."/>
            <person name="Hodgson G."/>
            <person name="Holroyd S."/>
            <person name="Hornsby T."/>
            <person name="Howarth S."/>
            <person name="Huckle E.J."/>
            <person name="Hunt S."/>
            <person name="Jagels K."/>
            <person name="James K.D."/>
            <person name="Jones L."/>
            <person name="Jones M."/>
            <person name="Leather S."/>
            <person name="McDonald S."/>
            <person name="McLean J."/>
            <person name="Mooney P."/>
            <person name="Moule S."/>
            <person name="Mungall K.L."/>
            <person name="Murphy L.D."/>
            <person name="Niblett D."/>
            <person name="Odell C."/>
            <person name="Oliver K."/>
            <person name="O'Neil S."/>
            <person name="Pearson D."/>
            <person name="Quail M.A."/>
            <person name="Rabbinowitsch E."/>
            <person name="Rutherford K.M."/>
            <person name="Rutter S."/>
            <person name="Saunders D."/>
            <person name="Seeger K."/>
            <person name="Sharp S."/>
            <person name="Skelton J."/>
            <person name="Simmonds M.N."/>
            <person name="Squares R."/>
            <person name="Squares S."/>
            <person name="Stevens K."/>
            <person name="Taylor K."/>
            <person name="Taylor R.G."/>
            <person name="Tivey A."/>
            <person name="Walsh S.V."/>
            <person name="Warren T."/>
            <person name="Whitehead S."/>
            <person name="Woodward J.R."/>
            <person name="Volckaert G."/>
            <person name="Aert R."/>
            <person name="Robben J."/>
            <person name="Grymonprez B."/>
            <person name="Weltjens I."/>
            <person name="Vanstreels E."/>
            <person name="Rieger M."/>
            <person name="Schaefer M."/>
            <person name="Mueller-Auer S."/>
            <person name="Gabel C."/>
            <person name="Fuchs M."/>
            <person name="Duesterhoeft A."/>
            <person name="Fritzc C."/>
            <person name="Holzer E."/>
            <person name="Moestl D."/>
            <person name="Hilbert H."/>
            <person name="Borzym K."/>
            <person name="Langer I."/>
            <person name="Beck A."/>
            <person name="Lehrach H."/>
            <person name="Reinhardt R."/>
            <person name="Pohl T.M."/>
            <person name="Eger P."/>
            <person name="Zimmermann W."/>
            <person name="Wedler H."/>
            <person name="Wambutt R."/>
            <person name="Purnelle B."/>
            <person name="Goffeau A."/>
            <person name="Cadieu E."/>
            <person name="Dreano S."/>
            <person name="Gloux S."/>
            <person name="Lelaure V."/>
            <person name="Mottier S."/>
            <person name="Galibert F."/>
            <person name="Aves S.J."/>
            <person name="Xiang Z."/>
            <person name="Hunt C."/>
            <person name="Moore K."/>
            <person name="Hurst S.M."/>
            <person name="Lucas M."/>
            <person name="Rochet M."/>
            <person name="Gaillardin C."/>
            <person name="Tallada V.A."/>
            <person name="Garzon A."/>
            <person name="Thode G."/>
            <person name="Daga R.R."/>
            <person name="Cruzado L."/>
            <person name="Jimenez J."/>
            <person name="Sanchez M."/>
            <person name="del Rey F."/>
            <person name="Benito J."/>
            <person name="Dominguez A."/>
            <person name="Revuelta J.L."/>
            <person name="Moreno S."/>
            <person name="Armstrong J."/>
            <person name="Forsburg S.L."/>
            <person name="Cerutti L."/>
            <person name="Lowe T."/>
            <person name="McCombie W.R."/>
            <person name="Paulsen I."/>
            <person name="Potashkin J."/>
            <person name="Shpakovski G.V."/>
            <person name="Ussery D."/>
            <person name="Barrell B.G."/>
            <person name="Nurse P."/>
        </authorList>
    </citation>
    <scope>NUCLEOTIDE SEQUENCE [LARGE SCALE GENOMIC DNA]</scope>
    <source>
        <strain>972 / ATCC 24843</strain>
    </source>
</reference>
<protein>
    <recommendedName>
        <fullName>Pumilio domain-containing protein C4G8.03c</fullName>
    </recommendedName>
</protein>
<evidence type="ECO:0000255" key="1">
    <source>
        <dbReference type="PROSITE-ProRule" id="PRU00318"/>
    </source>
</evidence>
<evidence type="ECO:0000256" key="2">
    <source>
        <dbReference type="SAM" id="MobiDB-lite"/>
    </source>
</evidence>
<organism>
    <name type="scientific">Schizosaccharomyces pombe (strain 972 / ATCC 24843)</name>
    <name type="common">Fission yeast</name>
    <dbReference type="NCBI Taxonomy" id="284812"/>
    <lineage>
        <taxon>Eukaryota</taxon>
        <taxon>Fungi</taxon>
        <taxon>Dikarya</taxon>
        <taxon>Ascomycota</taxon>
        <taxon>Taphrinomycotina</taxon>
        <taxon>Schizosaccharomycetes</taxon>
        <taxon>Schizosaccharomycetales</taxon>
        <taxon>Schizosaccharomycetaceae</taxon>
        <taxon>Schizosaccharomyces</taxon>
    </lineage>
</organism>
<dbReference type="EMBL" id="CU329670">
    <property type="protein sequence ID" value="CAA91204.1"/>
    <property type="molecule type" value="Genomic_DNA"/>
</dbReference>
<dbReference type="PIR" id="T38847">
    <property type="entry name" value="S62480"/>
</dbReference>
<dbReference type="SMR" id="Q09829"/>
<dbReference type="BioGRID" id="280098">
    <property type="interactions" value="13"/>
</dbReference>
<dbReference type="FunCoup" id="Q09829">
    <property type="interactions" value="330"/>
</dbReference>
<dbReference type="STRING" id="284812.Q09829"/>
<dbReference type="iPTMnet" id="Q09829"/>
<dbReference type="SwissPalm" id="Q09829"/>
<dbReference type="PaxDb" id="4896-SPAC4G8.03c.1"/>
<dbReference type="EnsemblFungi" id="SPAC4G8.03c.1">
    <property type="protein sequence ID" value="SPAC4G8.03c.1:pep"/>
    <property type="gene ID" value="SPAC4G8.03c"/>
</dbReference>
<dbReference type="KEGG" id="spo:2543684"/>
<dbReference type="PomBase" id="SPAC4G8.03c"/>
<dbReference type="VEuPathDB" id="FungiDB:SPAC4G8.03c"/>
<dbReference type="eggNOG" id="KOG2049">
    <property type="taxonomic scope" value="Eukaryota"/>
</dbReference>
<dbReference type="HOGENOM" id="CLU_359091_0_0_1"/>
<dbReference type="InParanoid" id="Q09829"/>
<dbReference type="OMA" id="HECPANQ"/>
<dbReference type="PRO" id="PR:Q09829"/>
<dbReference type="Proteomes" id="UP000002485">
    <property type="component" value="Chromosome I"/>
</dbReference>
<dbReference type="GO" id="GO:0005737">
    <property type="term" value="C:cytoplasm"/>
    <property type="evidence" value="ECO:0007005"/>
    <property type="project" value="PomBase"/>
</dbReference>
<dbReference type="GO" id="GO:0003729">
    <property type="term" value="F:mRNA binding"/>
    <property type="evidence" value="ECO:0000318"/>
    <property type="project" value="GO_Central"/>
</dbReference>
<dbReference type="GO" id="GO:0000288">
    <property type="term" value="P:nuclear-transcribed mRNA catabolic process, deadenylation-dependent decay"/>
    <property type="evidence" value="ECO:0000266"/>
    <property type="project" value="PomBase"/>
</dbReference>
<dbReference type="GO" id="GO:0010608">
    <property type="term" value="P:post-transcriptional regulation of gene expression"/>
    <property type="evidence" value="ECO:0000318"/>
    <property type="project" value="GO_Central"/>
</dbReference>
<dbReference type="CDD" id="cd07920">
    <property type="entry name" value="Pumilio"/>
    <property type="match status" value="1"/>
</dbReference>
<dbReference type="FunFam" id="1.25.10.10:FF:000237">
    <property type="entry name" value="Pumilio homolog 9"/>
    <property type="match status" value="1"/>
</dbReference>
<dbReference type="Gene3D" id="1.25.10.10">
    <property type="entry name" value="Leucine-rich Repeat Variant"/>
    <property type="match status" value="1"/>
</dbReference>
<dbReference type="InterPro" id="IPR011989">
    <property type="entry name" value="ARM-like"/>
</dbReference>
<dbReference type="InterPro" id="IPR016024">
    <property type="entry name" value="ARM-type_fold"/>
</dbReference>
<dbReference type="InterPro" id="IPR033133">
    <property type="entry name" value="PUM-HD"/>
</dbReference>
<dbReference type="InterPro" id="IPR033712">
    <property type="entry name" value="Pumilio_RNA-bd"/>
</dbReference>
<dbReference type="InterPro" id="IPR001313">
    <property type="entry name" value="Pumilio_RNA-bd_rpt"/>
</dbReference>
<dbReference type="PANTHER" id="PTHR12537:SF188">
    <property type="entry name" value="PUMILIO DOMAIN-CONTAINING PROTEIN C4G8.03C"/>
    <property type="match status" value="1"/>
</dbReference>
<dbReference type="PANTHER" id="PTHR12537">
    <property type="entry name" value="RNA BINDING PROTEIN PUMILIO-RELATED"/>
    <property type="match status" value="1"/>
</dbReference>
<dbReference type="Pfam" id="PF00806">
    <property type="entry name" value="PUF"/>
    <property type="match status" value="8"/>
</dbReference>
<dbReference type="SMART" id="SM00025">
    <property type="entry name" value="Pumilio"/>
    <property type="match status" value="8"/>
</dbReference>
<dbReference type="SUPFAM" id="SSF48371">
    <property type="entry name" value="ARM repeat"/>
    <property type="match status" value="1"/>
</dbReference>
<dbReference type="PROSITE" id="PS50302">
    <property type="entry name" value="PUM"/>
    <property type="match status" value="9"/>
</dbReference>
<dbReference type="PROSITE" id="PS50303">
    <property type="entry name" value="PUM_HD"/>
    <property type="match status" value="1"/>
</dbReference>
<gene>
    <name type="ORF">SPAC4G8.03c</name>
</gene>
<accession>Q09829</accession>
<feature type="chain" id="PRO_0000075935" description="Pumilio domain-containing protein C4G8.03c">
    <location>
        <begin position="1"/>
        <end position="780"/>
    </location>
</feature>
<feature type="domain" description="PUM-HD" evidence="1">
    <location>
        <begin position="435"/>
        <end position="778"/>
    </location>
</feature>
<feature type="repeat" description="Pumilio 1">
    <location>
        <begin position="462"/>
        <end position="497"/>
    </location>
</feature>
<feature type="repeat" description="Pumilio 2">
    <location>
        <begin position="498"/>
        <end position="533"/>
    </location>
</feature>
<feature type="repeat" description="Pumilio 3">
    <location>
        <begin position="534"/>
        <end position="569"/>
    </location>
</feature>
<feature type="repeat" description="Pumilio 4">
    <location>
        <begin position="570"/>
        <end position="606"/>
    </location>
</feature>
<feature type="repeat" description="Pumilio 5">
    <location>
        <begin position="607"/>
        <end position="642"/>
    </location>
</feature>
<feature type="repeat" description="Pumilio 6">
    <location>
        <begin position="643"/>
        <end position="678"/>
    </location>
</feature>
<feature type="repeat" description="Pumilio 7">
    <location>
        <begin position="679"/>
        <end position="714"/>
    </location>
</feature>
<feature type="repeat" description="Pumilio 8">
    <location>
        <begin position="715"/>
        <end position="752"/>
    </location>
</feature>
<feature type="repeat" description="Pumilio 9">
    <location>
        <begin position="753"/>
        <end position="780"/>
    </location>
</feature>
<feature type="region of interest" description="Disordered" evidence="2">
    <location>
        <begin position="1"/>
        <end position="29"/>
    </location>
</feature>
<feature type="region of interest" description="Disordered" evidence="2">
    <location>
        <begin position="298"/>
        <end position="330"/>
    </location>
</feature>
<feature type="region of interest" description="Disordered" evidence="2">
    <location>
        <begin position="358"/>
        <end position="411"/>
    </location>
</feature>
<feature type="compositionally biased region" description="Basic and acidic residues" evidence="2">
    <location>
        <begin position="298"/>
        <end position="307"/>
    </location>
</feature>
<feature type="compositionally biased region" description="Low complexity" evidence="2">
    <location>
        <begin position="311"/>
        <end position="322"/>
    </location>
</feature>
<feature type="compositionally biased region" description="Polar residues" evidence="2">
    <location>
        <begin position="358"/>
        <end position="382"/>
    </location>
</feature>
<sequence length="780" mass="88228">MVNRDAYNELNLNKKSQETNRKPSPLSSYTSISRELDYANQSPFSSNSFSPTELKARTSATFDVRSASTSPINASDFHKYSHDPFQRLFKAKGNASFSKTKSFPSSVTYSPSEETFPLTSGMNKSVHEYPFTLSESAISSSHKSSIPERRNFDSSVSVSNPLLHWNNVDTLLRDGSLENVNNSRQDQFLPYKTFSSTISNSDFLHRESSFSSLIDEESKLASLRNLNINDRPPLPVLKNSERNLLHRQLLSNHPFFSQNNVSLSTNSKNYSTDFTKIQSDSSLLQNRQQNHRIETDQLSHFPDHLDPSRIPSPYQPSSLQPLESRKLHSKVDVHSKKLNALSQLNPILRSENVLQNDNHHSSLSMDNDPTNVSTKNRNNQTVGEHPYVDDNKKKKKGPAKPKEKATLGKTVNSFFGSHSTSNYSKVPLSAKLTGEKSDDLSNLLKNKGKKKSQDNQIPHLVGFLGHLSTICKDQYGCRYLQKLLDENPKVNASLFFPEIRQSVVQLMIDPFGNYMCQKLFVYASREQKLSMLNGIGEGIVDICSNLYGTRSMQNIIDKLTSNEQISLLLKIIIPSLTTLACDNNGTHVLQKCIAKFPPEKLEPLFLSMEENLITLATNRHGCCILQRCLDRTNGDIQERLVNSIIKSCLLLVQNAYGNYLVQHVLELNIQPYTERIIEKFFGNICKLSLQKFSSNAIEQCIRTASPSTREQMLQEFLSFPNIEQLLDDCYANYVMQRFLNVADESQKFLILRSISHVIPKIQNTRHGRHILAKLTSSTSS</sequence>
<keyword id="KW-1185">Reference proteome</keyword>
<keyword id="KW-0677">Repeat</keyword>
<proteinExistence type="predicted"/>
<name>YAD3_SCHPO</name>